<comment type="function">
    <text evidence="5">Constitutes one of the E3 ubiquitin-protein ligases that mediate monoubiquitination of 'Lys-119' of histone H2A, thereby playing a central role in histone code and gene regulation. H2A 'Lys-119' ubiquitination gives a specific tag for epigenetic transcriptional repression and participates in X chromosome inactivation of female mammals. Essential component of a Polycomb group (PcG) multiprotein PRC1-like complex, a complex class required to maintain the transcriptionally repressive state of many genes, including Hox genes, throughout development. PcG PRC1 complex acts via chromatin remodeling and modification of histones, rendering chromatin heritably changed in its expressibility. Compared to RNF2/RING2, it does not have the main E3 ubiquitin ligase activity on histone H2A, and it may rather act as a modulator of RNF2/RING2 activity.</text>
</comment>
<comment type="catalytic activity">
    <reaction>
        <text>S-ubiquitinyl-[E2 ubiquitin-conjugating enzyme]-L-cysteine + [acceptor protein]-L-lysine = [E2 ubiquitin-conjugating enzyme]-L-cysteine + N(6)-ubiquitinyl-[acceptor protein]-L-lysine.</text>
        <dbReference type="EC" id="2.3.2.27"/>
    </reaction>
</comment>
<comment type="pathway">
    <text>Protein modification; protein ubiquitination.</text>
</comment>
<comment type="subunit">
    <text evidence="1 8 9">Component of chromatin-associated Polycomb (PcG) complexes. Interacts with BMI1 (By similarity). Part of the E2F6.com-1 complex in G0 phase composed of E2F6, MGA, MAX, TFDP1, CBX3, BAT8, EUHMTASE1, RING1, RNF2/RING2 MBLR, L3MBTL2 and YAF2. Interacts with CBX2 and PCGF6. Component of a PRC1-like complex. Component of repressive BCOR complex containing Polycomb group subcomplex at least composed of RYBP, PCGF1, BCOR and RNF2/RING2. Interacts with PCGF2, RNF2; CBX6, CBX7 and CBX8. Interacts with PHC2 (By similarity). Interacts with MN1 (PubMed:31839203). Interacts with USP26 (PubMed:28839133).</text>
</comment>
<comment type="interaction">
    <interactant intactId="EBI-752313">
        <id>Q06587</id>
    </interactant>
    <interactant intactId="EBI-2341576">
        <id>P35226</id>
        <label>BMI1</label>
    </interactant>
    <organismsDiffer>false</organismsDiffer>
    <experiments>23</experiments>
</comment>
<comment type="interaction">
    <interactant intactId="EBI-752313">
        <id>Q06587</id>
    </interactant>
    <interactant intactId="EBI-718729">
        <id>P55212</id>
        <label>CASP6</label>
    </interactant>
    <organismsDiffer>false</organismsDiffer>
    <experiments>3</experiments>
</comment>
<comment type="interaction">
    <interactant intactId="EBI-752313">
        <id>Q06587</id>
    </interactant>
    <interactant intactId="EBI-3951758">
        <id>O95503</id>
        <label>CBX6</label>
    </interactant>
    <organismsDiffer>false</organismsDiffer>
    <experiments>8</experiments>
</comment>
<comment type="interaction">
    <interactant intactId="EBI-752313">
        <id>Q06587</id>
    </interactant>
    <interactant intactId="EBI-3923843">
        <id>O95931</id>
        <label>CBX7</label>
    </interactant>
    <organismsDiffer>false</organismsDiffer>
    <experiments>6</experiments>
</comment>
<comment type="interaction">
    <interactant intactId="EBI-752313">
        <id>Q06587</id>
    </interactant>
    <interactant intactId="EBI-712912">
        <id>Q9HC52</id>
        <label>CBX8</label>
    </interactant>
    <organismsDiffer>false</organismsDiffer>
    <experiments>18</experiments>
</comment>
<comment type="interaction">
    <interactant intactId="EBI-752313">
        <id>Q06587</id>
    </interactant>
    <interactant intactId="EBI-10976677">
        <id>G5E9A7</id>
        <label>DMWD</label>
    </interactant>
    <organismsDiffer>false</organismsDiffer>
    <experiments>3</experiments>
</comment>
<comment type="interaction">
    <interactant intactId="EBI-752313">
        <id>Q06587</id>
    </interactant>
    <interactant intactId="EBI-21591415">
        <id>P13473-2</id>
        <label>LAMP2</label>
    </interactant>
    <organismsDiffer>false</organismsDiffer>
    <experiments>3</experiments>
</comment>
<comment type="interaction">
    <interactant intactId="EBI-752313">
        <id>Q06587</id>
    </interactant>
    <interactant intactId="EBI-10271199">
        <id>Q8NI38</id>
        <label>NFKBID</label>
    </interactant>
    <organismsDiffer>false</organismsDiffer>
    <experiments>3</experiments>
</comment>
<comment type="interaction">
    <interactant intactId="EBI-752313">
        <id>Q06587</id>
    </interactant>
    <interactant intactId="EBI-749901">
        <id>Q9BSM1</id>
        <label>PCGF1</label>
    </interactant>
    <organismsDiffer>false</organismsDiffer>
    <experiments>11</experiments>
</comment>
<comment type="interaction">
    <interactant intactId="EBI-752313">
        <id>Q06587</id>
    </interactant>
    <interactant intactId="EBI-2129767">
        <id>P35227</id>
        <label>PCGF2</label>
    </interactant>
    <organismsDiffer>false</organismsDiffer>
    <experiments>15</experiments>
</comment>
<comment type="interaction">
    <interactant intactId="EBI-752313">
        <id>Q06587</id>
    </interactant>
    <interactant intactId="EBI-2339807">
        <id>Q3KNV8</id>
        <label>PCGF3</label>
    </interactant>
    <organismsDiffer>false</organismsDiffer>
    <experiments>5</experiments>
</comment>
<comment type="interaction">
    <interactant intactId="EBI-752313">
        <id>Q06587</id>
    </interactant>
    <interactant intactId="EBI-12818023">
        <id>Q3KNV8-2</id>
        <label>PCGF3</label>
    </interactant>
    <organismsDiffer>false</organismsDiffer>
    <experiments>3</experiments>
</comment>
<comment type="interaction">
    <interactant intactId="EBI-752313">
        <id>Q06587</id>
    </interactant>
    <interactant intactId="EBI-2827999">
        <id>Q86SE9</id>
        <label>PCGF5</label>
    </interactant>
    <organismsDiffer>false</organismsDiffer>
    <experiments>10</experiments>
</comment>
<comment type="interaction">
    <interactant intactId="EBI-752313">
        <id>Q06587</id>
    </interactant>
    <interactant intactId="EBI-1048026">
        <id>Q9BYE7</id>
        <label>PCGF6</label>
    </interactant>
    <organismsDiffer>false</organismsDiffer>
    <experiments>6</experiments>
</comment>
<comment type="interaction">
    <interactant intactId="EBI-752313">
        <id>Q06587</id>
    </interactant>
    <interactant intactId="EBI-722416">
        <id>Q99496</id>
        <label>RNF2</label>
    </interactant>
    <organismsDiffer>false</organismsDiffer>
    <experiments>7</experiments>
</comment>
<comment type="interaction">
    <interactant intactId="EBI-752313">
        <id>Q06587</id>
    </interactant>
    <interactant intactId="EBI-752324">
        <id>Q8N488</id>
        <label>RYBP</label>
    </interactant>
    <organismsDiffer>false</organismsDiffer>
    <experiments>23</experiments>
</comment>
<comment type="interaction">
    <interactant intactId="EBI-752313">
        <id>Q06587</id>
    </interactant>
    <interactant intactId="EBI-5235340">
        <id>Q7Z699</id>
        <label>SPRED1</label>
    </interactant>
    <organismsDiffer>false</organismsDiffer>
    <experiments>3</experiments>
</comment>
<comment type="interaction">
    <interactant intactId="EBI-752313">
        <id>Q06587</id>
    </interactant>
    <interactant intactId="EBI-366083">
        <id>P04637</id>
        <label>TP53</label>
    </interactant>
    <organismsDiffer>false</organismsDiffer>
    <experiments>7</experiments>
</comment>
<comment type="interaction">
    <interactant intactId="EBI-752313">
        <id>Q06587</id>
    </interactant>
    <interactant intactId="EBI-743540">
        <id>P51668</id>
        <label>UBE2D1</label>
    </interactant>
    <organismsDiffer>false</organismsDiffer>
    <experiments>6</experiments>
</comment>
<comment type="interaction">
    <interactant intactId="EBI-752313">
        <id>Q06587</id>
    </interactant>
    <interactant intactId="EBI-347677">
        <id>P62837</id>
        <label>UBE2D2</label>
    </interactant>
    <organismsDiffer>false</organismsDiffer>
    <experiments>4</experiments>
</comment>
<comment type="interaction">
    <interactant intactId="EBI-752313">
        <id>Q06587</id>
    </interactant>
    <interactant intactId="EBI-745527">
        <id>Q9Y2X8</id>
        <label>UBE2D4</label>
    </interactant>
    <organismsDiffer>false</organismsDiffer>
    <experiments>4</experiments>
</comment>
<comment type="interaction">
    <interactant intactId="EBI-752313">
        <id>Q06587</id>
    </interactant>
    <interactant intactId="EBI-473850">
        <id>P61086</id>
        <label>UBE2K</label>
    </interactant>
    <organismsDiffer>false</organismsDiffer>
    <experiments>9</experiments>
</comment>
<comment type="interaction">
    <interactant intactId="EBI-752313">
        <id>Q06587</id>
    </interactant>
    <interactant intactId="EBI-306876">
        <id>P51784</id>
        <label>USP11</label>
    </interactant>
    <organismsDiffer>false</organismsDiffer>
    <experiments>4</experiments>
</comment>
<comment type="interaction">
    <interactant intactId="EBI-752313">
        <id>Q06587</id>
    </interactant>
    <interactant intactId="EBI-302474">
        <id>Q93009</id>
        <label>USP7</label>
    </interactant>
    <organismsDiffer>false</organismsDiffer>
    <experiments>5</experiments>
</comment>
<comment type="interaction">
    <interactant intactId="EBI-752313">
        <id>Q06587</id>
    </interactant>
    <interactant intactId="EBI-2842031">
        <id>Q8IY57</id>
        <label>YAF2</label>
    </interactant>
    <organismsDiffer>false</organismsDiffer>
    <experiments>10</experiments>
</comment>
<comment type="interaction">
    <interactant intactId="EBI-752313">
        <id>Q06587</id>
    </interactant>
    <interactant intactId="EBI-12111538">
        <id>Q8IY57-5</id>
        <label>YAF2</label>
    </interactant>
    <organismsDiffer>false</organismsDiffer>
    <experiments>8</experiments>
</comment>
<comment type="interaction">
    <interactant intactId="EBI-752313">
        <id>Q06587</id>
    </interactant>
    <interactant intactId="EBI-18199075">
        <id>Q96PE6</id>
        <label>ZIM3</label>
    </interactant>
    <organismsDiffer>false</organismsDiffer>
    <experiments>3</experiments>
</comment>
<comment type="interaction">
    <interactant intactId="EBI-7065222">
        <id>Q06587-2</id>
    </interactant>
    <interactant intactId="EBI-752324">
        <id>Q8N488</id>
        <label>RYBP</label>
    </interactant>
    <organismsDiffer>false</organismsDiffer>
    <experiments>3</experiments>
</comment>
<comment type="subcellular location">
    <subcellularLocation>
        <location evidence="6">Nucleus</location>
    </subcellularLocation>
    <subcellularLocation>
        <location evidence="6">Nucleus speckle</location>
    </subcellularLocation>
</comment>
<comment type="alternative products">
    <event type="alternative splicing"/>
    <isoform>
        <id>Q06587-1</id>
        <name>1</name>
        <sequence type="displayed"/>
    </isoform>
    <isoform>
        <id>Q06587-2</id>
        <name>2</name>
        <sequence type="described" ref="VSP_017694"/>
    </isoform>
</comment>
<comment type="miscellaneous">
    <text>The hPRC-H complex purification reported by PubMed:12167701 probably presents a mixture of different PRC1-like complexes.</text>
</comment>
<gene>
    <name evidence="14" type="primary">RING1</name>
    <name evidence="10" type="synonym">RING1A</name>
    <name type="synonym">RNF1</name>
</gene>
<feature type="chain" id="PRO_0000056384" description="E3 ubiquitin-protein ligase RING1">
    <location>
        <begin position="1"/>
        <end position="406"/>
    </location>
</feature>
<feature type="zinc finger region" description="RING-type" evidence="3">
    <location>
        <begin position="48"/>
        <end position="88"/>
    </location>
</feature>
<feature type="region of interest" description="Necessary for transcriptional repression" evidence="1">
    <location>
        <begin position="30"/>
        <end position="234"/>
    </location>
</feature>
<feature type="region of interest" description="Disordered" evidence="4">
    <location>
        <begin position="148"/>
        <end position="263"/>
    </location>
</feature>
<feature type="region of interest" description="Necessary for interaction with CBX2" evidence="1">
    <location>
        <begin position="230"/>
        <end position="406"/>
    </location>
</feature>
<feature type="region of interest" description="Disordered" evidence="4">
    <location>
        <begin position="309"/>
        <end position="354"/>
    </location>
</feature>
<feature type="short sequence motif" description="Nuclear localization signal" evidence="2">
    <location>
        <begin position="201"/>
        <end position="204"/>
    </location>
</feature>
<feature type="compositionally biased region" description="Acidic residues" evidence="4">
    <location>
        <begin position="175"/>
        <end position="187"/>
    </location>
</feature>
<feature type="compositionally biased region" description="Gly residues" evidence="4">
    <location>
        <begin position="205"/>
        <end position="228"/>
    </location>
</feature>
<feature type="compositionally biased region" description="Gly residues" evidence="4">
    <location>
        <begin position="235"/>
        <end position="244"/>
    </location>
</feature>
<feature type="compositionally biased region" description="Pro residues" evidence="4">
    <location>
        <begin position="246"/>
        <end position="258"/>
    </location>
</feature>
<feature type="compositionally biased region" description="Gly residues" evidence="4">
    <location>
        <begin position="315"/>
        <end position="343"/>
    </location>
</feature>
<feature type="modified residue" description="Phosphothreonine" evidence="20">
    <location>
        <position position="24"/>
    </location>
</feature>
<feature type="modified residue" description="Phosphoserine" evidence="15 16 19 20">
    <location>
        <position position="38"/>
    </location>
</feature>
<feature type="modified residue" description="Phosphoserine" evidence="18 19">
    <location>
        <position position="140"/>
    </location>
</feature>
<feature type="modified residue" description="Phosphoserine" evidence="16 20">
    <location>
        <position position="187"/>
    </location>
</feature>
<feature type="modified residue" description="Phosphoserine" evidence="16">
    <location>
        <position position="190"/>
    </location>
</feature>
<feature type="modified residue" description="Phosphothreonine" evidence="20">
    <location>
        <position position="215"/>
    </location>
</feature>
<feature type="modified residue" description="Phosphothreonine" evidence="17 20">
    <location>
        <position position="220"/>
    </location>
</feature>
<feature type="modified residue" description="Phosphoserine" evidence="19 20">
    <location>
        <position position="229"/>
    </location>
</feature>
<feature type="modified residue" description="Phosphoserine" evidence="20">
    <location>
        <position position="232"/>
    </location>
</feature>
<feature type="modified residue" description="Phosphoserine" evidence="18">
    <location>
        <position position="248"/>
    </location>
</feature>
<feature type="modified residue" description="Phosphoserine" evidence="18">
    <location>
        <position position="254"/>
    </location>
</feature>
<feature type="splice variant" id="VSP_017694" description="In isoform 2." evidence="11 12">
    <location>
        <begin position="1"/>
        <end position="29"/>
    </location>
</feature>
<feature type="sequence variant" id="VAR_076618" description="In dbSNP:rs1204881780." evidence="7">
    <original>R</original>
    <variation>Q</variation>
    <location>
        <position position="95"/>
    </location>
</feature>
<accession>Q06587</accession>
<accession>A8JZZ0</accession>
<accession>Q5JP96</accession>
<accession>Q5SQW2</accession>
<accession>Q86V19</accession>
<dbReference type="EC" id="2.3.2.27"/>
<dbReference type="EMBL" id="Z14000">
    <property type="protein sequence ID" value="CAA78389.1"/>
    <property type="molecule type" value="mRNA"/>
</dbReference>
<dbReference type="EMBL" id="BT007352">
    <property type="protein sequence ID" value="AAP36016.1"/>
    <property type="molecule type" value="mRNA"/>
</dbReference>
<dbReference type="EMBL" id="AK289355">
    <property type="protein sequence ID" value="BAF82044.1"/>
    <property type="molecule type" value="mRNA"/>
</dbReference>
<dbReference type="EMBL" id="AL031228">
    <property type="protein sequence ID" value="CAA20235.1"/>
    <property type="molecule type" value="Genomic_DNA"/>
</dbReference>
<dbReference type="EMBL" id="AL031228">
    <property type="protein sequence ID" value="CAI95620.1"/>
    <property type="molecule type" value="Genomic_DNA"/>
</dbReference>
<dbReference type="EMBL" id="AL645940">
    <property type="status" value="NOT_ANNOTATED_CDS"/>
    <property type="molecule type" value="Genomic_DNA"/>
</dbReference>
<dbReference type="EMBL" id="AL713971">
    <property type="status" value="NOT_ANNOTATED_CDS"/>
    <property type="molecule type" value="Genomic_DNA"/>
</dbReference>
<dbReference type="EMBL" id="AL844527">
    <property type="status" value="NOT_ANNOTATED_CDS"/>
    <property type="molecule type" value="Genomic_DNA"/>
</dbReference>
<dbReference type="EMBL" id="CR547129">
    <property type="status" value="NOT_ANNOTATED_CDS"/>
    <property type="molecule type" value="Genomic_DNA"/>
</dbReference>
<dbReference type="EMBL" id="CR759733">
    <property type="status" value="NOT_ANNOTATED_CDS"/>
    <property type="molecule type" value="Genomic_DNA"/>
</dbReference>
<dbReference type="EMBL" id="CR759786">
    <property type="status" value="NOT_ANNOTATED_CDS"/>
    <property type="molecule type" value="Genomic_DNA"/>
</dbReference>
<dbReference type="EMBL" id="CR847841">
    <property type="status" value="NOT_ANNOTATED_CDS"/>
    <property type="molecule type" value="Genomic_DNA"/>
</dbReference>
<dbReference type="EMBL" id="BC002922">
    <property type="protein sequence ID" value="AAH02922.2"/>
    <property type="molecule type" value="mRNA"/>
</dbReference>
<dbReference type="EMBL" id="BC051866">
    <property type="protein sequence ID" value="AAH51866.1"/>
    <property type="molecule type" value="mRNA"/>
</dbReference>
<dbReference type="CCDS" id="CCDS34424.1">
    <molecule id="Q06587-1"/>
</dbReference>
<dbReference type="PIR" id="A47380">
    <property type="entry name" value="A47380"/>
</dbReference>
<dbReference type="RefSeq" id="NP_002922.2">
    <molecule id="Q06587-1"/>
    <property type="nucleotide sequence ID" value="NM_002931.4"/>
</dbReference>
<dbReference type="SMR" id="Q06587"/>
<dbReference type="BioGRID" id="111947">
    <property type="interactions" value="213"/>
</dbReference>
<dbReference type="ComplexPortal" id="CPX-2260">
    <property type="entry name" value="Non-canonical polycomb repressive complex 1.2, RING1-YAF2 variant"/>
</dbReference>
<dbReference type="ComplexPortal" id="CPX-2273">
    <property type="entry name" value="Non-canonical polycomb repressive complex 1.4, RING1-RYBP variant"/>
</dbReference>
<dbReference type="ComplexPortal" id="CPX-2274">
    <property type="entry name" value="Non-canonical polycomb repressive complex 1.4, RING1-YAF2 variant"/>
</dbReference>
<dbReference type="ComplexPortal" id="CPX-2283">
    <property type="entry name" value="Non-canonical polycomb repressive complex 1.3, RING1-RYBP-CKIIA2 variant"/>
</dbReference>
<dbReference type="ComplexPortal" id="CPX-2285">
    <property type="entry name" value="Non-canonical polycomb repressive complex 1.3, RING1-RYBP-CKIIA1-A2 variant"/>
</dbReference>
<dbReference type="ComplexPortal" id="CPX-2286">
    <property type="entry name" value="Non-canonical polycomb repressive complex 1.3, RING1-RYBP-CKIIA1 variant"/>
</dbReference>
<dbReference type="ComplexPortal" id="CPX-2288">
    <property type="entry name" value="Non-canonical polycomb repressive complex 1.3, RING1-YAF2-CKIIA2 variant"/>
</dbReference>
<dbReference type="ComplexPortal" id="CPX-2289">
    <property type="entry name" value="Non-canonical polycomb repressive complex 1.3, RING1-YAF2-CKIIA1-A2 variant"/>
</dbReference>
<dbReference type="ComplexPortal" id="CPX-2290">
    <property type="entry name" value="Non-canonical polycomb repressive complex 1.3, RING1-YAF2-CKIIA1 variant"/>
</dbReference>
<dbReference type="ComplexPortal" id="CPX-2305">
    <property type="entry name" value="Non-canonical polycomb repressive complex 1.6, RING1-RYBP variant"/>
</dbReference>
<dbReference type="ComplexPortal" id="CPX-2354">
    <property type="entry name" value="Non-canonical polycomb repressive complex 1.1, RING1-PCGF1-RYBP variant"/>
</dbReference>
<dbReference type="ComplexPortal" id="CPX-2480">
    <property type="entry name" value="Polycomb repressive complex 1, RING1-PCGF2-CBX2-PHC3 variant"/>
</dbReference>
<dbReference type="ComplexPortal" id="CPX-2550">
    <property type="entry name" value="Non-canonical polycomb repressive complex 1.6, RING1-YAF2 variant"/>
</dbReference>
<dbReference type="ComplexPortal" id="CPX-2594">
    <property type="entry name" value="Polycomb repressive complex 1, RING1-PCGF2-CBX4-PHC1 variant"/>
</dbReference>
<dbReference type="ComplexPortal" id="CPX-2598">
    <property type="entry name" value="Polycomb repressive complex 1, RING1-PCGF2-CBX6-PHC3 variant"/>
</dbReference>
<dbReference type="ComplexPortal" id="CPX-2600">
    <property type="entry name" value="Polycomb repressive complex 1, RING1-PCGF2-CBX7-PHC1 variant"/>
</dbReference>
<dbReference type="ComplexPortal" id="CPX-2601">
    <property type="entry name" value="Polycomb repressive complex 1, RING1-PCGF2-CBX7-PHC2 variant"/>
</dbReference>
<dbReference type="ComplexPortal" id="CPX-2605">
    <property type="entry name" value="Polycomb repressive complex 1, RING1-PCGF2-CBX2-PHC1 variant"/>
</dbReference>
<dbReference type="ComplexPortal" id="CPX-2609">
    <property type="entry name" value="Polycomb repressive complex 1, RING1-PCGF2-CBX2-PHC2 variant"/>
</dbReference>
<dbReference type="ComplexPortal" id="CPX-2613">
    <property type="entry name" value="Polycomb repressive complex 1, RING1-PCGF2-CBX4-PHC2 variant"/>
</dbReference>
<dbReference type="ComplexPortal" id="CPX-2615">
    <property type="entry name" value="Polycomb repressive complex 1, RING1-PCGF2-CBX4-PHC3 variant"/>
</dbReference>
<dbReference type="ComplexPortal" id="CPX-2616">
    <property type="entry name" value="Polycomb repressive complex 1, RING1-PCGF2-CBX6-PHC1 variant"/>
</dbReference>
<dbReference type="ComplexPortal" id="CPX-2617">
    <property type="entry name" value="Polycomb repressive complex 1, RING1-PCGF2-CBX6-PHC2 variant"/>
</dbReference>
<dbReference type="ComplexPortal" id="CPX-2619">
    <property type="entry name" value="Polycomb repressive complex 1, RING1-PCGF2-CBX7-PHC3 variant"/>
</dbReference>
<dbReference type="ComplexPortal" id="CPX-2621">
    <property type="entry name" value="Polycomb repressive complex 1, RING1-PCGF2-CBX8-PHC1 variant"/>
</dbReference>
<dbReference type="ComplexPortal" id="CPX-2622">
    <property type="entry name" value="Polycomb repressive complex 1, RING1-PCGF2-CBX8-PHC2 variant"/>
</dbReference>
<dbReference type="ComplexPortal" id="CPX-2623">
    <property type="entry name" value="Polycomb repressive complex 1, RING1-PCGF2-CBX8-PHC3 variant"/>
</dbReference>
<dbReference type="ComplexPortal" id="CPX-2630">
    <property type="entry name" value="Non-canonical polycomb repressive complex 1.2, RING1-RYBP variant"/>
</dbReference>
<dbReference type="ComplexPortal" id="CPX-7501">
    <property type="entry name" value="Polycomb repressive complex 1, RING1-PCGF4-CBX2-PHC1 variant"/>
</dbReference>
<dbReference type="ComplexPortal" id="CPX-7502">
    <property type="entry name" value="Polycomb repressive complex 1, RING1-PCGF4-CBX2-PHC2 variant"/>
</dbReference>
<dbReference type="ComplexPortal" id="CPX-7504">
    <property type="entry name" value="Polycomb repressive complex 1, RING1-PCGF4-CBX2-PHC3 variant"/>
</dbReference>
<dbReference type="ComplexPortal" id="CPX-7505">
    <property type="entry name" value="Polycomb repressive complex 1, RING1-PCGF4-CBX4-PHC1 variant"/>
</dbReference>
<dbReference type="ComplexPortal" id="CPX-7506">
    <property type="entry name" value="Polycomb repressive complex 1, RING1-PCGF4-CBX4-PHC2 variant"/>
</dbReference>
<dbReference type="ComplexPortal" id="CPX-7508">
    <property type="entry name" value="Polycomb repressive complex 1, RING1-PCGF4-CBX4-PHC3 variant"/>
</dbReference>
<dbReference type="ComplexPortal" id="CPX-7509">
    <property type="entry name" value="Polycomb repressive complex 1, RING1-PCGF4-CBX6-PHC1 variant"/>
</dbReference>
<dbReference type="ComplexPortal" id="CPX-7510">
    <property type="entry name" value="Polycomb repressive complex 1, RING1-PCGF4-CBX6-PHC2 variant"/>
</dbReference>
<dbReference type="ComplexPortal" id="CPX-7511">
    <property type="entry name" value="Polycomb repressive complex 1, RING1-PCGF4-CBX6-PHC3 variant"/>
</dbReference>
<dbReference type="ComplexPortal" id="CPX-7513">
    <property type="entry name" value="Polycomb repressive complex 1, RING1-PCGF4-CBX7-PHC1 variant"/>
</dbReference>
<dbReference type="ComplexPortal" id="CPX-7514">
    <property type="entry name" value="Polycomb repressive complex 1, RING1-PCGF4-CBX7-PHC2 variant"/>
</dbReference>
<dbReference type="ComplexPortal" id="CPX-7515">
    <property type="entry name" value="Polycomb repressive complex 1, RING1-PCGF4-CBX7-PHC3 variant"/>
</dbReference>
<dbReference type="ComplexPortal" id="CPX-7516">
    <property type="entry name" value="Polycomb repressive complex 1, RING1-PCGF4-CBX8-PHC1 variant"/>
</dbReference>
<dbReference type="ComplexPortal" id="CPX-7517">
    <property type="entry name" value="Polycomb repressive complex 1, RING1-PCGF4-CBX8-PHC2 variant"/>
</dbReference>
<dbReference type="ComplexPortal" id="CPX-7518">
    <property type="entry name" value="Polycomb repressive complex 1, RING1-PCGF4-CBX8-PHC3 variant"/>
</dbReference>
<dbReference type="ComplexPortal" id="CPX-7561">
    <property type="entry name" value="Non-canonical polycomb repressive complex 1.1, RING1-PCGF1-YAF2 variant"/>
</dbReference>
<dbReference type="ComplexPortal" id="CPX-7581">
    <property type="entry name" value="Non-canonical polycomb repressive complex 1.5, RING1-RYBP-CKIIA2 variant"/>
</dbReference>
<dbReference type="ComplexPortal" id="CPX-7582">
    <property type="entry name" value="Non-canonical polycomb repressive complex 1.5, RING1-RYBP-CKIIA1-A2 variant"/>
</dbReference>
<dbReference type="ComplexPortal" id="CPX-7583">
    <property type="entry name" value="Non-canonical polycomb repressive complex 1.5, RING1-RYBP-CKIIA1 variant"/>
</dbReference>
<dbReference type="ComplexPortal" id="CPX-7584">
    <property type="entry name" value="Non-canonical polycomb repressive complex 1.5, RING1-YAF2-CKIIA2 variant"/>
</dbReference>
<dbReference type="ComplexPortal" id="CPX-7585">
    <property type="entry name" value="Non-canonical polycomb repressive complex 1.5, RING1-YAF2-CKIIA1-A2 variant"/>
</dbReference>
<dbReference type="ComplexPortal" id="CPX-7586">
    <property type="entry name" value="Non-canonical polycomb repressive complex 1.5, RING1-YAF2-CKIIA1 variant"/>
</dbReference>
<dbReference type="CORUM" id="Q06587"/>
<dbReference type="DIP" id="DIP-42043N"/>
<dbReference type="FunCoup" id="Q06587">
    <property type="interactions" value="2272"/>
</dbReference>
<dbReference type="IntAct" id="Q06587">
    <property type="interactions" value="137"/>
</dbReference>
<dbReference type="MINT" id="Q06587"/>
<dbReference type="STRING" id="9606.ENSP00000363787"/>
<dbReference type="GlyGen" id="Q06587">
    <property type="glycosylation" value="2 sites, 1 N-linked glycan (1 site), 1 O-linked glycan (1 site)"/>
</dbReference>
<dbReference type="iPTMnet" id="Q06587"/>
<dbReference type="PhosphoSitePlus" id="Q06587"/>
<dbReference type="BioMuta" id="RING1"/>
<dbReference type="DMDM" id="90110053"/>
<dbReference type="jPOST" id="Q06587"/>
<dbReference type="MassIVE" id="Q06587"/>
<dbReference type="PaxDb" id="9606-ENSP00000363787"/>
<dbReference type="PeptideAtlas" id="Q06587"/>
<dbReference type="ProteomicsDB" id="58462">
    <molecule id="Q06587-1"/>
</dbReference>
<dbReference type="ProteomicsDB" id="58463">
    <molecule id="Q06587-2"/>
</dbReference>
<dbReference type="Pumba" id="Q06587"/>
<dbReference type="TopDownProteomics" id="Q06587-1">
    <molecule id="Q06587-1"/>
</dbReference>
<dbReference type="TopDownProteomics" id="Q06587-2">
    <molecule id="Q06587-2"/>
</dbReference>
<dbReference type="Antibodypedia" id="1772">
    <property type="antibodies" value="589 antibodies from 36 providers"/>
</dbReference>
<dbReference type="DNASU" id="6015"/>
<dbReference type="Ensembl" id="ENST00000374656.5">
    <molecule id="Q06587-1"/>
    <property type="protein sequence ID" value="ENSP00000363787.4"/>
    <property type="gene ID" value="ENSG00000204227.5"/>
</dbReference>
<dbReference type="Ensembl" id="ENST00000383212.4">
    <molecule id="Q06587-1"/>
    <property type="protein sequence ID" value="ENSP00000372699.4"/>
    <property type="gene ID" value="ENSG00000206287.5"/>
</dbReference>
<dbReference type="Ensembl" id="ENST00000415941.2">
    <molecule id="Q06587-1"/>
    <property type="protein sequence ID" value="ENSP00000412190.2"/>
    <property type="gene ID" value="ENSG00000226788.3"/>
</dbReference>
<dbReference type="Ensembl" id="ENST00000427374.2">
    <molecule id="Q06587-1"/>
    <property type="protein sequence ID" value="ENSP00000400572.2"/>
    <property type="gene ID" value="ENSG00000231115.3"/>
</dbReference>
<dbReference type="Ensembl" id="ENST00000430233.2">
    <molecule id="Q06587-1"/>
    <property type="protein sequence ID" value="ENSP00000396271.2"/>
    <property type="gene ID" value="ENSG00000228520.3"/>
</dbReference>
<dbReference type="Ensembl" id="ENST00000436128.2">
    <molecule id="Q06587-1"/>
    <property type="protein sequence ID" value="ENSP00000396439.2"/>
    <property type="gene ID" value="ENSG00000235107.3"/>
</dbReference>
<dbReference type="GeneID" id="6015"/>
<dbReference type="KEGG" id="hsa:6015"/>
<dbReference type="MANE-Select" id="ENST00000374656.5">
    <property type="protein sequence ID" value="ENSP00000363787.4"/>
    <property type="RefSeq nucleotide sequence ID" value="NM_002931.4"/>
    <property type="RefSeq protein sequence ID" value="NP_002922.2"/>
</dbReference>
<dbReference type="UCSC" id="uc003odk.4">
    <molecule id="Q06587-1"/>
    <property type="organism name" value="human"/>
</dbReference>
<dbReference type="AGR" id="HGNC:10018"/>
<dbReference type="CTD" id="6015"/>
<dbReference type="DisGeNET" id="6015"/>
<dbReference type="GeneCards" id="RING1"/>
<dbReference type="HGNC" id="HGNC:10018">
    <property type="gene designation" value="RING1"/>
</dbReference>
<dbReference type="HPA" id="ENSG00000204227">
    <property type="expression patterns" value="Low tissue specificity"/>
</dbReference>
<dbReference type="MIM" id="602045">
    <property type="type" value="gene"/>
</dbReference>
<dbReference type="neXtProt" id="NX_Q06587"/>
<dbReference type="OpenTargets" id="ENSG00000204227"/>
<dbReference type="PharmGKB" id="PA34393"/>
<dbReference type="VEuPathDB" id="HostDB:ENSG00000204227"/>
<dbReference type="eggNOG" id="KOG0311">
    <property type="taxonomic scope" value="Eukaryota"/>
</dbReference>
<dbReference type="GeneTree" id="ENSGT00940000161022"/>
<dbReference type="HOGENOM" id="CLU_056557_1_0_1"/>
<dbReference type="InParanoid" id="Q06587"/>
<dbReference type="OMA" id="GWKGMIV"/>
<dbReference type="OrthoDB" id="337575at2759"/>
<dbReference type="PAN-GO" id="Q06587">
    <property type="GO annotations" value="6 GO annotations based on evolutionary models"/>
</dbReference>
<dbReference type="PhylomeDB" id="Q06587"/>
<dbReference type="TreeFam" id="TF105501"/>
<dbReference type="PathwayCommons" id="Q06587"/>
<dbReference type="Reactome" id="R-HSA-2559580">
    <property type="pathway name" value="Oxidative Stress Induced Senescence"/>
</dbReference>
<dbReference type="Reactome" id="R-HSA-3108214">
    <property type="pathway name" value="SUMOylation of DNA damage response and repair proteins"/>
</dbReference>
<dbReference type="Reactome" id="R-HSA-3899300">
    <property type="pathway name" value="SUMOylation of transcription cofactors"/>
</dbReference>
<dbReference type="Reactome" id="R-HSA-4551638">
    <property type="pathway name" value="SUMOylation of chromatin organization proteins"/>
</dbReference>
<dbReference type="Reactome" id="R-HSA-4570464">
    <property type="pathway name" value="SUMOylation of RNA binding proteins"/>
</dbReference>
<dbReference type="Reactome" id="R-HSA-4655427">
    <property type="pathway name" value="SUMOylation of DNA methylation proteins"/>
</dbReference>
<dbReference type="Reactome" id="R-HSA-8939243">
    <property type="pathway name" value="RUNX1 interacts with co-factors whose precise effect on RUNX1 targets is not known"/>
</dbReference>
<dbReference type="Reactome" id="R-HSA-8943724">
    <property type="pathway name" value="Regulation of PTEN gene transcription"/>
</dbReference>
<dbReference type="Reactome" id="R-HSA-8953750">
    <property type="pathway name" value="Transcriptional Regulation by E2F6"/>
</dbReference>
<dbReference type="SignaLink" id="Q06587"/>
<dbReference type="SIGNOR" id="Q06587"/>
<dbReference type="UniPathway" id="UPA00143"/>
<dbReference type="BioGRID-ORCS" id="6015">
    <property type="hits" value="26 hits in 1209 CRISPR screens"/>
</dbReference>
<dbReference type="CD-CODE" id="804901D1">
    <property type="entry name" value="Nuclear speckle"/>
</dbReference>
<dbReference type="CD-CODE" id="91857CE7">
    <property type="entry name" value="Nucleolus"/>
</dbReference>
<dbReference type="CD-CODE" id="F701F3BC">
    <property type="entry name" value="PcG body"/>
</dbReference>
<dbReference type="ChiTaRS" id="RING1">
    <property type="organism name" value="human"/>
</dbReference>
<dbReference type="GeneWiki" id="RING1"/>
<dbReference type="GenomeRNAi" id="6015"/>
<dbReference type="Pharos" id="Q06587">
    <property type="development level" value="Tbio"/>
</dbReference>
<dbReference type="PRO" id="PR:Q06587"/>
<dbReference type="Proteomes" id="UP000005640">
    <property type="component" value="Chromosome 6"/>
</dbReference>
<dbReference type="RNAct" id="Q06587">
    <property type="molecule type" value="protein"/>
</dbReference>
<dbReference type="Bgee" id="ENSG00000204227">
    <property type="expression patterns" value="Expressed in pituitary gland and 96 other cell types or tissues"/>
</dbReference>
<dbReference type="ExpressionAtlas" id="Q06587">
    <property type="expression patterns" value="baseline and differential"/>
</dbReference>
<dbReference type="GO" id="GO:0005829">
    <property type="term" value="C:cytosol"/>
    <property type="evidence" value="ECO:0000314"/>
    <property type="project" value="HPA"/>
</dbReference>
<dbReference type="GO" id="GO:0016607">
    <property type="term" value="C:nuclear speck"/>
    <property type="evidence" value="ECO:0007669"/>
    <property type="project" value="UniProtKB-SubCell"/>
</dbReference>
<dbReference type="GO" id="GO:0005654">
    <property type="term" value="C:nucleoplasm"/>
    <property type="evidence" value="ECO:0000314"/>
    <property type="project" value="HPA"/>
</dbReference>
<dbReference type="GO" id="GO:0005634">
    <property type="term" value="C:nucleus"/>
    <property type="evidence" value="ECO:0000314"/>
    <property type="project" value="UniProtKB"/>
</dbReference>
<dbReference type="GO" id="GO:0031519">
    <property type="term" value="C:PcG protein complex"/>
    <property type="evidence" value="ECO:0000314"/>
    <property type="project" value="UniProtKB"/>
</dbReference>
<dbReference type="GO" id="GO:0035102">
    <property type="term" value="C:PRC1 complex"/>
    <property type="evidence" value="ECO:0000314"/>
    <property type="project" value="UniProtKB"/>
</dbReference>
<dbReference type="GO" id="GO:0001739">
    <property type="term" value="C:sex chromatin"/>
    <property type="evidence" value="ECO:0007669"/>
    <property type="project" value="Ensembl"/>
</dbReference>
<dbReference type="GO" id="GO:0000151">
    <property type="term" value="C:ubiquitin ligase complex"/>
    <property type="evidence" value="ECO:0000318"/>
    <property type="project" value="GO_Central"/>
</dbReference>
<dbReference type="GO" id="GO:0003682">
    <property type="term" value="F:chromatin binding"/>
    <property type="evidence" value="ECO:0000318"/>
    <property type="project" value="GO_Central"/>
</dbReference>
<dbReference type="GO" id="GO:0061630">
    <property type="term" value="F:ubiquitin protein ligase activity"/>
    <property type="evidence" value="ECO:0000318"/>
    <property type="project" value="GO_Central"/>
</dbReference>
<dbReference type="GO" id="GO:0097027">
    <property type="term" value="F:ubiquitin-protein transferase activator activity"/>
    <property type="evidence" value="ECO:0007669"/>
    <property type="project" value="Ensembl"/>
</dbReference>
<dbReference type="GO" id="GO:0008270">
    <property type="term" value="F:zinc ion binding"/>
    <property type="evidence" value="ECO:0007669"/>
    <property type="project" value="UniProtKB-KW"/>
</dbReference>
<dbReference type="GO" id="GO:0009952">
    <property type="term" value="P:anterior/posterior pattern specification"/>
    <property type="evidence" value="ECO:0007669"/>
    <property type="project" value="Ensembl"/>
</dbReference>
<dbReference type="GO" id="GO:0048593">
    <property type="term" value="P:camera-type eye morphogenesis"/>
    <property type="evidence" value="ECO:0007669"/>
    <property type="project" value="Ensembl"/>
</dbReference>
<dbReference type="GO" id="GO:0006338">
    <property type="term" value="P:chromatin remodeling"/>
    <property type="evidence" value="ECO:0000314"/>
    <property type="project" value="UniProtKB"/>
</dbReference>
<dbReference type="GO" id="GO:0045892">
    <property type="term" value="P:negative regulation of DNA-templated transcription"/>
    <property type="evidence" value="ECO:0000314"/>
    <property type="project" value="UniProtKB"/>
</dbReference>
<dbReference type="GO" id="GO:0016567">
    <property type="term" value="P:protein ubiquitination"/>
    <property type="evidence" value="ECO:0007669"/>
    <property type="project" value="UniProtKB-UniPathway"/>
</dbReference>
<dbReference type="CDD" id="cd17166">
    <property type="entry name" value="RAWUL_RING1"/>
    <property type="match status" value="1"/>
</dbReference>
<dbReference type="CDD" id="cd16740">
    <property type="entry name" value="RING-HC_RING2"/>
    <property type="match status" value="1"/>
</dbReference>
<dbReference type="FunFam" id="3.30.40.10:FF:000265">
    <property type="entry name" value="E3 ubiquitin-protein ligase RING1"/>
    <property type="match status" value="1"/>
</dbReference>
<dbReference type="Gene3D" id="3.10.20.90">
    <property type="entry name" value="Phosphatidylinositol 3-kinase Catalytic Subunit, Chain A, domain 1"/>
    <property type="match status" value="1"/>
</dbReference>
<dbReference type="Gene3D" id="3.30.40.10">
    <property type="entry name" value="Zinc/RING finger domain, C3HC4 (zinc finger)"/>
    <property type="match status" value="1"/>
</dbReference>
<dbReference type="InterPro" id="IPR032443">
    <property type="entry name" value="RAWUL"/>
</dbReference>
<dbReference type="InterPro" id="IPR043540">
    <property type="entry name" value="RING1/RING2"/>
</dbReference>
<dbReference type="InterPro" id="IPR001841">
    <property type="entry name" value="Znf_RING"/>
</dbReference>
<dbReference type="InterPro" id="IPR013083">
    <property type="entry name" value="Znf_RING/FYVE/PHD"/>
</dbReference>
<dbReference type="InterPro" id="IPR017907">
    <property type="entry name" value="Znf_RING_CS"/>
</dbReference>
<dbReference type="PANTHER" id="PTHR46076:SF2">
    <property type="entry name" value="E3 UBIQUITIN-PROTEIN LIGASE RING1"/>
    <property type="match status" value="1"/>
</dbReference>
<dbReference type="PANTHER" id="PTHR46076">
    <property type="entry name" value="E3 UBIQUITIN-PROTEIN LIGASE RING1 / RING 2 FAMILY MEMBER"/>
    <property type="match status" value="1"/>
</dbReference>
<dbReference type="Pfam" id="PF16207">
    <property type="entry name" value="RAWUL"/>
    <property type="match status" value="1"/>
</dbReference>
<dbReference type="Pfam" id="PF13923">
    <property type="entry name" value="zf-C3HC4_2"/>
    <property type="match status" value="1"/>
</dbReference>
<dbReference type="SMART" id="SM00184">
    <property type="entry name" value="RING"/>
    <property type="match status" value="1"/>
</dbReference>
<dbReference type="SUPFAM" id="SSF57850">
    <property type="entry name" value="RING/U-box"/>
    <property type="match status" value="1"/>
</dbReference>
<dbReference type="PROSITE" id="PS00518">
    <property type="entry name" value="ZF_RING_1"/>
    <property type="match status" value="1"/>
</dbReference>
<dbReference type="PROSITE" id="PS50089">
    <property type="entry name" value="ZF_RING_2"/>
    <property type="match status" value="1"/>
</dbReference>
<sequence length="406" mass="42429">MTTPANAQNASKTWELSLYELHRTPQEAIMDGTEIAVSPRSLHSELMCPICLDMLKNTMTTKECLHRFCSDCIVTALRSGNKECPTCRKKLVSKRSLRPDPNFDALISKIYPSREEYEAHQDRVLIRLSRLHNQQALSSSIEEGLRMQAMHRAQRVRRPIPGSDQTTTMSGGEGEPGEGEGDGEDVSSDSAPDSAPGPAPKRPRGGGAGGSSVGTGGGGTGGVGGGAGSEDSGDRGGTLGGGTLGPPSPPGAPSPPEPGGEIELVFRPHPLLVEKGEYCQTRYVKTTGNATVDHLSKYLALRIALERRQQQEAGEPGGPGGGASDTGGPDGCGGEGGGAGGGDGPEEPALPSLEGVSEKQYTIYIAPGGGAFTTLNGSLTLELVNEKFWKVSRPLELCYAPTKDPK</sequence>
<proteinExistence type="evidence at protein level"/>
<keyword id="KW-0025">Alternative splicing</keyword>
<keyword id="KW-0156">Chromatin regulator</keyword>
<keyword id="KW-0479">Metal-binding</keyword>
<keyword id="KW-0539">Nucleus</keyword>
<keyword id="KW-0597">Phosphoprotein</keyword>
<keyword id="KW-1267">Proteomics identification</keyword>
<keyword id="KW-1185">Reference proteome</keyword>
<keyword id="KW-0678">Repressor</keyword>
<keyword id="KW-0804">Transcription</keyword>
<keyword id="KW-0805">Transcription regulation</keyword>
<keyword id="KW-0808">Transferase</keyword>
<keyword id="KW-0833">Ubl conjugation pathway</keyword>
<keyword id="KW-0862">Zinc</keyword>
<keyword id="KW-0863">Zinc-finger</keyword>
<protein>
    <recommendedName>
        <fullName>E3 ubiquitin-protein ligase RING1</fullName>
        <ecNumber>2.3.2.27</ecNumber>
    </recommendedName>
    <alternativeName>
        <fullName>Polycomb complex protein RING1</fullName>
    </alternativeName>
    <alternativeName>
        <fullName>RING finger protein 1</fullName>
    </alternativeName>
    <alternativeName>
        <fullName evidence="13">RING-type E3 ubiquitin transferase RING1</fullName>
    </alternativeName>
    <alternativeName>
        <fullName>Really interesting new gene 1 protein</fullName>
    </alternativeName>
</protein>
<evidence type="ECO:0000250" key="1"/>
<evidence type="ECO:0000255" key="2"/>
<evidence type="ECO:0000255" key="3">
    <source>
        <dbReference type="PROSITE-ProRule" id="PRU00175"/>
    </source>
</evidence>
<evidence type="ECO:0000256" key="4">
    <source>
        <dbReference type="SAM" id="MobiDB-lite"/>
    </source>
</evidence>
<evidence type="ECO:0000269" key="5">
    <source>
    </source>
</evidence>
<evidence type="ECO:0000269" key="6">
    <source>
    </source>
</evidence>
<evidence type="ECO:0000269" key="7">
    <source>
    </source>
</evidence>
<evidence type="ECO:0000269" key="8">
    <source>
    </source>
</evidence>
<evidence type="ECO:0000269" key="9">
    <source>
    </source>
</evidence>
<evidence type="ECO:0000303" key="10">
    <source>
    </source>
</evidence>
<evidence type="ECO:0000303" key="11">
    <source>
    </source>
</evidence>
<evidence type="ECO:0000303" key="12">
    <source ref="2"/>
</evidence>
<evidence type="ECO:0000305" key="13"/>
<evidence type="ECO:0000312" key="14">
    <source>
        <dbReference type="HGNC" id="HGNC:10018"/>
    </source>
</evidence>
<evidence type="ECO:0007744" key="15">
    <source>
    </source>
</evidence>
<evidence type="ECO:0007744" key="16">
    <source>
    </source>
</evidence>
<evidence type="ECO:0007744" key="17">
    <source>
    </source>
</evidence>
<evidence type="ECO:0007744" key="18">
    <source>
    </source>
</evidence>
<evidence type="ECO:0007744" key="19">
    <source>
    </source>
</evidence>
<evidence type="ECO:0007744" key="20">
    <source>
    </source>
</evidence>
<reference key="1">
    <citation type="journal article" date="1993" name="Proc. Natl. Acad. Sci. U.S.A.">
        <title>Identification and preliminary characterization of a protein motif related to the zinc finger.</title>
        <authorList>
            <person name="Lovering R."/>
            <person name="Hanson I.M."/>
            <person name="Borden K.L.B."/>
            <person name="Martin S."/>
            <person name="O'Reilly N.J."/>
            <person name="Evan G.I."/>
            <person name="Rahman D."/>
            <person name="Pappin D.J.C."/>
            <person name="Trowsdale J."/>
            <person name="Freemont P.S."/>
        </authorList>
    </citation>
    <scope>NUCLEOTIDE SEQUENCE [MRNA] (ISOFORM 2)</scope>
</reference>
<reference key="2">
    <citation type="submission" date="2003-05" db="EMBL/GenBank/DDBJ databases">
        <title>Cloning of human full-length CDSs in BD Creator(TM) system donor vector.</title>
        <authorList>
            <person name="Kalnine N."/>
            <person name="Chen X."/>
            <person name="Rolfs A."/>
            <person name="Halleck A."/>
            <person name="Hines L."/>
            <person name="Eisenstein S."/>
            <person name="Koundinya M."/>
            <person name="Raphael J."/>
            <person name="Moreira D."/>
            <person name="Kelley T."/>
            <person name="LaBaer J."/>
            <person name="Lin Y."/>
            <person name="Phelan M."/>
            <person name="Farmer A."/>
        </authorList>
    </citation>
    <scope>NUCLEOTIDE SEQUENCE [LARGE SCALE MRNA] (ISOFORM 2)</scope>
</reference>
<reference key="3">
    <citation type="journal article" date="2004" name="Nat. Genet.">
        <title>Complete sequencing and characterization of 21,243 full-length human cDNAs.</title>
        <authorList>
            <person name="Ota T."/>
            <person name="Suzuki Y."/>
            <person name="Nishikawa T."/>
            <person name="Otsuki T."/>
            <person name="Sugiyama T."/>
            <person name="Irie R."/>
            <person name="Wakamatsu A."/>
            <person name="Hayashi K."/>
            <person name="Sato H."/>
            <person name="Nagai K."/>
            <person name="Kimura K."/>
            <person name="Makita H."/>
            <person name="Sekine M."/>
            <person name="Obayashi M."/>
            <person name="Nishi T."/>
            <person name="Shibahara T."/>
            <person name="Tanaka T."/>
            <person name="Ishii S."/>
            <person name="Yamamoto J."/>
            <person name="Saito K."/>
            <person name="Kawai Y."/>
            <person name="Isono Y."/>
            <person name="Nakamura Y."/>
            <person name="Nagahari K."/>
            <person name="Murakami K."/>
            <person name="Yasuda T."/>
            <person name="Iwayanagi T."/>
            <person name="Wagatsuma M."/>
            <person name="Shiratori A."/>
            <person name="Sudo H."/>
            <person name="Hosoiri T."/>
            <person name="Kaku Y."/>
            <person name="Kodaira H."/>
            <person name="Kondo H."/>
            <person name="Sugawara M."/>
            <person name="Takahashi M."/>
            <person name="Kanda K."/>
            <person name="Yokoi T."/>
            <person name="Furuya T."/>
            <person name="Kikkawa E."/>
            <person name="Omura Y."/>
            <person name="Abe K."/>
            <person name="Kamihara K."/>
            <person name="Katsuta N."/>
            <person name="Sato K."/>
            <person name="Tanikawa M."/>
            <person name="Yamazaki M."/>
            <person name="Ninomiya K."/>
            <person name="Ishibashi T."/>
            <person name="Yamashita H."/>
            <person name="Murakawa K."/>
            <person name="Fujimori K."/>
            <person name="Tanai H."/>
            <person name="Kimata M."/>
            <person name="Watanabe M."/>
            <person name="Hiraoka S."/>
            <person name="Chiba Y."/>
            <person name="Ishida S."/>
            <person name="Ono Y."/>
            <person name="Takiguchi S."/>
            <person name="Watanabe S."/>
            <person name="Yosida M."/>
            <person name="Hotuta T."/>
            <person name="Kusano J."/>
            <person name="Kanehori K."/>
            <person name="Takahashi-Fujii A."/>
            <person name="Hara H."/>
            <person name="Tanase T.-O."/>
            <person name="Nomura Y."/>
            <person name="Togiya S."/>
            <person name="Komai F."/>
            <person name="Hara R."/>
            <person name="Takeuchi K."/>
            <person name="Arita M."/>
            <person name="Imose N."/>
            <person name="Musashino K."/>
            <person name="Yuuki H."/>
            <person name="Oshima A."/>
            <person name="Sasaki N."/>
            <person name="Aotsuka S."/>
            <person name="Yoshikawa Y."/>
            <person name="Matsunawa H."/>
            <person name="Ichihara T."/>
            <person name="Shiohata N."/>
            <person name="Sano S."/>
            <person name="Moriya S."/>
            <person name="Momiyama H."/>
            <person name="Satoh N."/>
            <person name="Takami S."/>
            <person name="Terashima Y."/>
            <person name="Suzuki O."/>
            <person name="Nakagawa S."/>
            <person name="Senoh A."/>
            <person name="Mizoguchi H."/>
            <person name="Goto Y."/>
            <person name="Shimizu F."/>
            <person name="Wakebe H."/>
            <person name="Hishigaki H."/>
            <person name="Watanabe T."/>
            <person name="Sugiyama A."/>
            <person name="Takemoto M."/>
            <person name="Kawakami B."/>
            <person name="Yamazaki M."/>
            <person name="Watanabe K."/>
            <person name="Kumagai A."/>
            <person name="Itakura S."/>
            <person name="Fukuzumi Y."/>
            <person name="Fujimori Y."/>
            <person name="Komiyama M."/>
            <person name="Tashiro H."/>
            <person name="Tanigami A."/>
            <person name="Fujiwara T."/>
            <person name="Ono T."/>
            <person name="Yamada K."/>
            <person name="Fujii Y."/>
            <person name="Ozaki K."/>
            <person name="Hirao M."/>
            <person name="Ohmori Y."/>
            <person name="Kawabata A."/>
            <person name="Hikiji T."/>
            <person name="Kobatake N."/>
            <person name="Inagaki H."/>
            <person name="Ikema Y."/>
            <person name="Okamoto S."/>
            <person name="Okitani R."/>
            <person name="Kawakami T."/>
            <person name="Noguchi S."/>
            <person name="Itoh T."/>
            <person name="Shigeta K."/>
            <person name="Senba T."/>
            <person name="Matsumura K."/>
            <person name="Nakajima Y."/>
            <person name="Mizuno T."/>
            <person name="Morinaga M."/>
            <person name="Sasaki M."/>
            <person name="Togashi T."/>
            <person name="Oyama M."/>
            <person name="Hata H."/>
            <person name="Watanabe M."/>
            <person name="Komatsu T."/>
            <person name="Mizushima-Sugano J."/>
            <person name="Satoh T."/>
            <person name="Shirai Y."/>
            <person name="Takahashi Y."/>
            <person name="Nakagawa K."/>
            <person name="Okumura K."/>
            <person name="Nagase T."/>
            <person name="Nomura N."/>
            <person name="Kikuchi H."/>
            <person name="Masuho Y."/>
            <person name="Yamashita R."/>
            <person name="Nakai K."/>
            <person name="Yada T."/>
            <person name="Nakamura Y."/>
            <person name="Ohara O."/>
            <person name="Isogai T."/>
            <person name="Sugano S."/>
        </authorList>
    </citation>
    <scope>NUCLEOTIDE SEQUENCE [LARGE SCALE MRNA]</scope>
</reference>
<reference key="4">
    <citation type="journal article" date="2003" name="Nature">
        <title>The DNA sequence and analysis of human chromosome 6.</title>
        <authorList>
            <person name="Mungall A.J."/>
            <person name="Palmer S.A."/>
            <person name="Sims S.K."/>
            <person name="Edwards C.A."/>
            <person name="Ashurst J.L."/>
            <person name="Wilming L."/>
            <person name="Jones M.C."/>
            <person name="Horton R."/>
            <person name="Hunt S.E."/>
            <person name="Scott C.E."/>
            <person name="Gilbert J.G.R."/>
            <person name="Clamp M.E."/>
            <person name="Bethel G."/>
            <person name="Milne S."/>
            <person name="Ainscough R."/>
            <person name="Almeida J.P."/>
            <person name="Ambrose K.D."/>
            <person name="Andrews T.D."/>
            <person name="Ashwell R.I.S."/>
            <person name="Babbage A.K."/>
            <person name="Bagguley C.L."/>
            <person name="Bailey J."/>
            <person name="Banerjee R."/>
            <person name="Barker D.J."/>
            <person name="Barlow K.F."/>
            <person name="Bates K."/>
            <person name="Beare D.M."/>
            <person name="Beasley H."/>
            <person name="Beasley O."/>
            <person name="Bird C.P."/>
            <person name="Blakey S.E."/>
            <person name="Bray-Allen S."/>
            <person name="Brook J."/>
            <person name="Brown A.J."/>
            <person name="Brown J.Y."/>
            <person name="Burford D.C."/>
            <person name="Burrill W."/>
            <person name="Burton J."/>
            <person name="Carder C."/>
            <person name="Carter N.P."/>
            <person name="Chapman J.C."/>
            <person name="Clark S.Y."/>
            <person name="Clark G."/>
            <person name="Clee C.M."/>
            <person name="Clegg S."/>
            <person name="Cobley V."/>
            <person name="Collier R.E."/>
            <person name="Collins J.E."/>
            <person name="Colman L.K."/>
            <person name="Corby N.R."/>
            <person name="Coville G.J."/>
            <person name="Culley K.M."/>
            <person name="Dhami P."/>
            <person name="Davies J."/>
            <person name="Dunn M."/>
            <person name="Earthrowl M.E."/>
            <person name="Ellington A.E."/>
            <person name="Evans K.A."/>
            <person name="Faulkner L."/>
            <person name="Francis M.D."/>
            <person name="Frankish A."/>
            <person name="Frankland J."/>
            <person name="French L."/>
            <person name="Garner P."/>
            <person name="Garnett J."/>
            <person name="Ghori M.J."/>
            <person name="Gilby L.M."/>
            <person name="Gillson C.J."/>
            <person name="Glithero R.J."/>
            <person name="Grafham D.V."/>
            <person name="Grant M."/>
            <person name="Gribble S."/>
            <person name="Griffiths C."/>
            <person name="Griffiths M.N.D."/>
            <person name="Hall R."/>
            <person name="Halls K.S."/>
            <person name="Hammond S."/>
            <person name="Harley J.L."/>
            <person name="Hart E.A."/>
            <person name="Heath P.D."/>
            <person name="Heathcott R."/>
            <person name="Holmes S.J."/>
            <person name="Howden P.J."/>
            <person name="Howe K.L."/>
            <person name="Howell G.R."/>
            <person name="Huckle E."/>
            <person name="Humphray S.J."/>
            <person name="Humphries M.D."/>
            <person name="Hunt A.R."/>
            <person name="Johnson C.M."/>
            <person name="Joy A.A."/>
            <person name="Kay M."/>
            <person name="Keenan S.J."/>
            <person name="Kimberley A.M."/>
            <person name="King A."/>
            <person name="Laird G.K."/>
            <person name="Langford C."/>
            <person name="Lawlor S."/>
            <person name="Leongamornlert D.A."/>
            <person name="Leversha M."/>
            <person name="Lloyd C.R."/>
            <person name="Lloyd D.M."/>
            <person name="Loveland J.E."/>
            <person name="Lovell J."/>
            <person name="Martin S."/>
            <person name="Mashreghi-Mohammadi M."/>
            <person name="Maslen G.L."/>
            <person name="Matthews L."/>
            <person name="McCann O.T."/>
            <person name="McLaren S.J."/>
            <person name="McLay K."/>
            <person name="McMurray A."/>
            <person name="Moore M.J.F."/>
            <person name="Mullikin J.C."/>
            <person name="Niblett D."/>
            <person name="Nickerson T."/>
            <person name="Novik K.L."/>
            <person name="Oliver K."/>
            <person name="Overton-Larty E.K."/>
            <person name="Parker A."/>
            <person name="Patel R."/>
            <person name="Pearce A.V."/>
            <person name="Peck A.I."/>
            <person name="Phillimore B.J.C.T."/>
            <person name="Phillips S."/>
            <person name="Plumb R.W."/>
            <person name="Porter K.M."/>
            <person name="Ramsey Y."/>
            <person name="Ranby S.A."/>
            <person name="Rice C.M."/>
            <person name="Ross M.T."/>
            <person name="Searle S.M."/>
            <person name="Sehra H.K."/>
            <person name="Sheridan E."/>
            <person name="Skuce C.D."/>
            <person name="Smith S."/>
            <person name="Smith M."/>
            <person name="Spraggon L."/>
            <person name="Squares S.L."/>
            <person name="Steward C.A."/>
            <person name="Sycamore N."/>
            <person name="Tamlyn-Hall G."/>
            <person name="Tester J."/>
            <person name="Theaker A.J."/>
            <person name="Thomas D.W."/>
            <person name="Thorpe A."/>
            <person name="Tracey A."/>
            <person name="Tromans A."/>
            <person name="Tubby B."/>
            <person name="Wall M."/>
            <person name="Wallis J.M."/>
            <person name="West A.P."/>
            <person name="White S.S."/>
            <person name="Whitehead S.L."/>
            <person name="Whittaker H."/>
            <person name="Wild A."/>
            <person name="Willey D.J."/>
            <person name="Wilmer T.E."/>
            <person name="Wood J.M."/>
            <person name="Wray P.W."/>
            <person name="Wyatt J.C."/>
            <person name="Young L."/>
            <person name="Younger R.M."/>
            <person name="Bentley D.R."/>
            <person name="Coulson A."/>
            <person name="Durbin R.M."/>
            <person name="Hubbard T."/>
            <person name="Sulston J.E."/>
            <person name="Dunham I."/>
            <person name="Rogers J."/>
            <person name="Beck S."/>
        </authorList>
    </citation>
    <scope>NUCLEOTIDE SEQUENCE [LARGE SCALE GENOMIC DNA]</scope>
</reference>
<reference key="5">
    <citation type="journal article" date="2004" name="Genome Res.">
        <title>The status, quality, and expansion of the NIH full-length cDNA project: the Mammalian Gene Collection (MGC).</title>
        <authorList>
            <consortium name="The MGC Project Team"/>
        </authorList>
    </citation>
    <scope>NUCLEOTIDE SEQUENCE [LARGE SCALE MRNA] (ISOFORM 1)</scope>
    <source>
        <tissue>Eye</tissue>
        <tissue>Skin</tissue>
    </source>
</reference>
<reference key="6">
    <citation type="journal article" date="1997" name="Mol. Cell. Biol.">
        <title>RING1 is associated with the polycomb group protein complex and acts as a transcriptional repressor.</title>
        <authorList>
            <person name="Satijn D.P.E."/>
            <person name="Gunster M.J."/>
            <person name="van der Vlag J."/>
            <person name="Hamer K.M."/>
            <person name="Schul W."/>
            <person name="Alkema M.J."/>
            <person name="Saurin A.J."/>
            <person name="Freemont P.S."/>
            <person name="van Driel R."/>
            <person name="Otte A.P."/>
        </authorList>
    </citation>
    <scope>CHARACTERIZATION</scope>
    <scope>INTERACTION WITH PHC2</scope>
</reference>
<reference key="7">
    <citation type="journal article" date="1999" name="Mol. Cell. Biol.">
        <title>RING1 interacts with multiple Polycomb-group proteins and displays tumorigenic activity.</title>
        <authorList>
            <person name="Satijn D.P.E."/>
            <person name="Otte A.P."/>
        </authorList>
    </citation>
    <scope>CHARACTERIZATION</scope>
</reference>
<reference key="8">
    <citation type="journal article" date="2002" name="Genes Cells">
        <title>MBLR, a new RING finger protein resembling mammalian Polycomb gene products, is regulated by cell cycle-dependent phosphorylation.</title>
        <authorList>
            <person name="Akasaka T."/>
            <person name="Takahashi N."/>
            <person name="Suzuki M."/>
            <person name="Koseki H."/>
            <person name="Bodmer R."/>
            <person name="Koga H."/>
        </authorList>
    </citation>
    <scope>INTERACTION WITH PCGF6</scope>
</reference>
<reference key="9">
    <citation type="journal article" date="2002" name="Mol. Cell. Biol.">
        <title>The core of the polycomb repressive complex is compositionally and functionally conserved in flies and humans.</title>
        <authorList>
            <person name="Levine S.S."/>
            <person name="Weiss A."/>
            <person name="Erdjument-Bromage H."/>
            <person name="Shao Z."/>
            <person name="Tempst P."/>
            <person name="Kingston R.E."/>
        </authorList>
    </citation>
    <scope>IDENTIFICATION IN A PRC1-LIKE HPRC-H COMPLEX</scope>
</reference>
<reference key="10">
    <citation type="journal article" date="2002" name="Science">
        <title>A complex with chromatin modifiers that occupies E2F- and Myc-responsive genes in G0 cells.</title>
        <authorList>
            <person name="Ogawa H."/>
            <person name="Ishiguro K."/>
            <person name="Gaubatz S."/>
            <person name="Livingston D.M."/>
            <person name="Nakatani Y."/>
        </authorList>
    </citation>
    <scope>IDENTIFICATION IN COMPLEX WITH E2F6; TFDP1; MAX; MGA; EUHMTASE1; BAT8; CBX3; RNF2; MBLR; L3MBTL2 AND YAF2</scope>
</reference>
<reference key="11">
    <citation type="journal article" date="2004" name="Nature">
        <title>Role of histone H2A ubiquitination in Polycomb silencing.</title>
        <authorList>
            <person name="Wang H."/>
            <person name="Wang L."/>
            <person name="Erdjument-Bromage H."/>
            <person name="Vidal M."/>
            <person name="Tempst P."/>
            <person name="Jones R.S."/>
            <person name="Zhang Y."/>
        </authorList>
    </citation>
    <scope>IDENTIFICATION IN A PRC1-LIKE COMPLEX WITH RNF2; BMI1 AND PHC2</scope>
</reference>
<reference key="12">
    <citation type="journal article" date="2005" name="Mol. Cell">
        <title>Role of Bmi-1 and Ring1A in H2A ubiquitylation and Hox gene silencing.</title>
        <authorList>
            <person name="Cao R."/>
            <person name="Tsukada Y."/>
            <person name="Zhang Y."/>
        </authorList>
    </citation>
    <scope>FUNCTION</scope>
</reference>
<reference key="13">
    <citation type="journal article" date="2006" name="Mol. Cell. Biol.">
        <title>Polycomb group and SCF ubiquitin ligases are found in a novel BCOR complex that is recruited to BCL6 targets.</title>
        <authorList>
            <person name="Gearhart M.D."/>
            <person name="Corcoran C.M."/>
            <person name="Wamstad J.A."/>
            <person name="Bardwell V.J."/>
        </authorList>
    </citation>
    <scope>INTERACTION WITH RYBP; PCGF1; BCOR AND RNF2</scope>
</reference>
<reference key="14">
    <citation type="journal article" date="2008" name="J. Proteome Res.">
        <title>Combining protein-based IMAC, peptide-based IMAC, and MudPIT for efficient phosphoproteomic analysis.</title>
        <authorList>
            <person name="Cantin G.T."/>
            <person name="Yi W."/>
            <person name="Lu B."/>
            <person name="Park S.K."/>
            <person name="Xu T."/>
            <person name="Lee J.-D."/>
            <person name="Yates J.R. III"/>
        </authorList>
    </citation>
    <scope>PHOSPHORYLATION [LARGE SCALE ANALYSIS] AT SER-38</scope>
    <scope>IDENTIFICATION BY MASS SPECTROMETRY [LARGE SCALE ANALYSIS]</scope>
    <source>
        <tissue>Cervix carcinoma</tissue>
    </source>
</reference>
<reference key="15">
    <citation type="journal article" date="2008" name="Proc. Natl. Acad. Sci. U.S.A.">
        <title>A quantitative atlas of mitotic phosphorylation.</title>
        <authorList>
            <person name="Dephoure N."/>
            <person name="Zhou C."/>
            <person name="Villen J."/>
            <person name="Beausoleil S.A."/>
            <person name="Bakalarski C.E."/>
            <person name="Elledge S.J."/>
            <person name="Gygi S.P."/>
        </authorList>
    </citation>
    <scope>PHOSPHORYLATION [LARGE SCALE ANALYSIS] AT SER-38; SER-187 AND SER-190</scope>
    <scope>IDENTIFICATION BY MASS SPECTROMETRY [LARGE SCALE ANALYSIS]</scope>
    <source>
        <tissue>Cervix carcinoma</tissue>
    </source>
</reference>
<reference key="16">
    <citation type="journal article" date="2009" name="PLoS ONE">
        <title>Several distinct polycomb complexes regulate and co-localize on the INK4a tumor suppressor locus.</title>
        <authorList>
            <person name="Maertens G.N."/>
            <person name="El Messaoudi-Aubert S."/>
            <person name="Racek T."/>
            <person name="Stock J.K."/>
            <person name="Nicholls J."/>
            <person name="Rodriguez-Niedenfuhr M."/>
            <person name="Gil J."/>
            <person name="Peters G."/>
        </authorList>
    </citation>
    <scope>IDENTIFICATION IN A PRC1-LIKE COMPLEX</scope>
    <scope>INTERACTION WITH PCGF2</scope>
</reference>
<reference key="17">
    <citation type="journal article" date="2009" name="Sci. Signal.">
        <title>Quantitative phosphoproteomic analysis of T cell receptor signaling reveals system-wide modulation of protein-protein interactions.</title>
        <authorList>
            <person name="Mayya V."/>
            <person name="Lundgren D.H."/>
            <person name="Hwang S.-I."/>
            <person name="Rezaul K."/>
            <person name="Wu L."/>
            <person name="Eng J.K."/>
            <person name="Rodionov V."/>
            <person name="Han D.K."/>
        </authorList>
    </citation>
    <scope>PHOSPHORYLATION [LARGE SCALE ANALYSIS] AT THR-220</scope>
    <scope>IDENTIFICATION BY MASS SPECTROMETRY [LARGE SCALE ANALYSIS]</scope>
    <source>
        <tissue>Leukemic T-cell</tissue>
    </source>
</reference>
<reference key="18">
    <citation type="journal article" date="2010" name="Sci. Signal.">
        <title>Quantitative phosphoproteomics reveals widespread full phosphorylation site occupancy during mitosis.</title>
        <authorList>
            <person name="Olsen J.V."/>
            <person name="Vermeulen M."/>
            <person name="Santamaria A."/>
            <person name="Kumar C."/>
            <person name="Miller M.L."/>
            <person name="Jensen L.J."/>
            <person name="Gnad F."/>
            <person name="Cox J."/>
            <person name="Jensen T.S."/>
            <person name="Nigg E.A."/>
            <person name="Brunak S."/>
            <person name="Mann M."/>
        </authorList>
    </citation>
    <scope>PHOSPHORYLATION [LARGE SCALE ANALYSIS] AT SER-140; SER-248 AND SER-254</scope>
    <scope>IDENTIFICATION BY MASS SPECTROMETRY [LARGE SCALE ANALYSIS]</scope>
    <source>
        <tissue>Cervix carcinoma</tissue>
    </source>
</reference>
<reference key="19">
    <citation type="journal article" date="2011" name="BMC Syst. Biol.">
        <title>Initial characterization of the human central proteome.</title>
        <authorList>
            <person name="Burkard T.R."/>
            <person name="Planyavsky M."/>
            <person name="Kaupe I."/>
            <person name="Breitwieser F.P."/>
            <person name="Buerckstuemmer T."/>
            <person name="Bennett K.L."/>
            <person name="Superti-Furga G."/>
            <person name="Colinge J."/>
        </authorList>
    </citation>
    <scope>IDENTIFICATION BY MASS SPECTROMETRY [LARGE SCALE ANALYSIS]</scope>
</reference>
<reference key="20">
    <citation type="journal article" date="2011" name="Mol. Cell. Proteomics">
        <title>Interaction proteomics analysis of polycomb proteins defines distinct PRC1 Complexes in mammalian cells.</title>
        <authorList>
            <person name="Vandamme J."/>
            <person name="Volkel P."/>
            <person name="Rosnoblet C."/>
            <person name="Le Faou P."/>
            <person name="Angrand P.O."/>
        </authorList>
    </citation>
    <scope>IDENTIFICATION IN A PRC1-LIKE COMPLEX</scope>
    <scope>INTERACTION WITH CBX6; CBX7 AND CBX8</scope>
    <scope>SUBCELLULAR LOCATION</scope>
</reference>
<reference key="21">
    <citation type="journal article" date="2013" name="J. Proteome Res.">
        <title>Toward a comprehensive characterization of a human cancer cell phosphoproteome.</title>
        <authorList>
            <person name="Zhou H."/>
            <person name="Di Palma S."/>
            <person name="Preisinger C."/>
            <person name="Peng M."/>
            <person name="Polat A.N."/>
            <person name="Heck A.J."/>
            <person name="Mohammed S."/>
        </authorList>
    </citation>
    <scope>PHOSPHORYLATION [LARGE SCALE ANALYSIS] AT SER-38; SER-140 AND SER-229</scope>
    <scope>IDENTIFICATION BY MASS SPECTROMETRY [LARGE SCALE ANALYSIS]</scope>
    <source>
        <tissue>Cervix carcinoma</tissue>
        <tissue>Erythroleukemia</tissue>
    </source>
</reference>
<reference key="22">
    <citation type="journal article" date="2014" name="J. Proteomics">
        <title>An enzyme assisted RP-RPLC approach for in-depth analysis of human liver phosphoproteome.</title>
        <authorList>
            <person name="Bian Y."/>
            <person name="Song C."/>
            <person name="Cheng K."/>
            <person name="Dong M."/>
            <person name="Wang F."/>
            <person name="Huang J."/>
            <person name="Sun D."/>
            <person name="Wang L."/>
            <person name="Ye M."/>
            <person name="Zou H."/>
        </authorList>
    </citation>
    <scope>PHOSPHORYLATION [LARGE SCALE ANALYSIS] AT THR-24; SER-38; SER-187; THR-215; THR-220; SER-229 AND SER-232</scope>
    <scope>IDENTIFICATION BY MASS SPECTROMETRY [LARGE SCALE ANALYSIS]</scope>
    <source>
        <tissue>Liver</tissue>
    </source>
</reference>
<reference key="23">
    <citation type="journal article" date="2020" name="Am. J. Hum. Genet.">
        <title>Gain-of-function MN1 truncation variants cause a recognizable syndrome with craniofacial and brain abnormalities.</title>
        <authorList>
            <person name="Miyake N."/>
            <person name="Takahashi H."/>
            <person name="Nakamura K."/>
            <person name="Isidor B."/>
            <person name="Hiraki Y."/>
            <person name="Koshimizu E."/>
            <person name="Shiina M."/>
            <person name="Sasaki K."/>
            <person name="Suzuki H."/>
            <person name="Abe R."/>
            <person name="Kimura Y."/>
            <person name="Akiyama T."/>
            <person name="Tomizawa S.I."/>
            <person name="Hirose T."/>
            <person name="Hamanaka K."/>
            <person name="Miyatake S."/>
            <person name="Mitsuhashi S."/>
            <person name="Mizuguchi T."/>
            <person name="Takata A."/>
            <person name="Obo K."/>
            <person name="Kato M."/>
            <person name="Ogata K."/>
            <person name="Matsumoto N."/>
        </authorList>
    </citation>
    <scope>INTERACTION WITH MN1</scope>
</reference>
<reference key="24">
    <citation type="journal article" date="2017" name="Nat. Commun.">
        <title>USP26 functions as a negative regulator of cellular reprogramming by stabilising PRC1 complex components.</title>
        <authorList>
            <person name="Ning B."/>
            <person name="Zhao W."/>
            <person name="Qian C."/>
            <person name="Liu P."/>
            <person name="Li Q."/>
            <person name="Li W."/>
            <person name="Wang R.F."/>
        </authorList>
    </citation>
    <scope>INTERACTION WITH USP26</scope>
</reference>
<reference key="25">
    <citation type="journal article" date="2015" name="J. Med. Genet.">
        <title>De novo gain-of-function and loss-of-function mutations of SCN8A in patients with intellectual disabilities and epilepsy.</title>
        <authorList>
            <person name="Blanchard M.G."/>
            <person name="Willemsen M.H."/>
            <person name="Walker J.B."/>
            <person name="Dib-Hajj S.D."/>
            <person name="Waxman S.G."/>
            <person name="Jongmans M.C."/>
            <person name="Kleefstra T."/>
            <person name="van de Warrenburg B.P."/>
            <person name="Praamstra P."/>
            <person name="Nicolai J."/>
            <person name="Yntema H.G."/>
            <person name="Bindels R.J."/>
            <person name="Meisler M.H."/>
            <person name="Kamsteeg E.J."/>
        </authorList>
    </citation>
    <scope>VARIANT GLN-95</scope>
</reference>
<name>RING1_HUMAN</name>
<organism>
    <name type="scientific">Homo sapiens</name>
    <name type="common">Human</name>
    <dbReference type="NCBI Taxonomy" id="9606"/>
    <lineage>
        <taxon>Eukaryota</taxon>
        <taxon>Metazoa</taxon>
        <taxon>Chordata</taxon>
        <taxon>Craniata</taxon>
        <taxon>Vertebrata</taxon>
        <taxon>Euteleostomi</taxon>
        <taxon>Mammalia</taxon>
        <taxon>Eutheria</taxon>
        <taxon>Euarchontoglires</taxon>
        <taxon>Primates</taxon>
        <taxon>Haplorrhini</taxon>
        <taxon>Catarrhini</taxon>
        <taxon>Hominidae</taxon>
        <taxon>Homo</taxon>
    </lineage>
</organism>